<accession>Q6WEG4</accession>
<reference key="1">
    <citation type="journal article" date="2001" name="Mol. Plant Microbe Interact.">
        <title>Type III secretion contributes to the pathogenesis of the soft-rot pathogen Erwinia carotovora: partial characterization of the hrp gene cluster.</title>
        <authorList>
            <person name="Rantakari A."/>
            <person name="Virtaharju O."/>
            <person name="Vahamiko S."/>
            <person name="Taira S."/>
            <person name="Palva E.T."/>
            <person name="Saarilahti H.T."/>
            <person name="Romantschuk M."/>
        </authorList>
    </citation>
    <scope>NUCLEOTIDE SEQUENCE [GENOMIC DNA]</scope>
    <source>
        <strain>SCC1</strain>
    </source>
</reference>
<reference key="2">
    <citation type="journal article" date="2003" name="Mol. Gen. Genet.">
        <title>Characterization of the hrp pathogenicity cluster of Erwinia carotovora subsp. carotovora: high basal level expression in a mutant is associated with reduced virulence.</title>
        <authorList>
            <person name="Lehtimaeki S."/>
            <person name="Rantakari A."/>
            <person name="Routtu J."/>
            <person name="Tuikkala A."/>
            <person name="Li J."/>
            <person name="Virtaharju O."/>
            <person name="Palva E.T."/>
            <person name="Romantschuk M."/>
            <person name="Saarilahti H.T."/>
        </authorList>
    </citation>
    <scope>NUCLEOTIDE SEQUENCE [GENOMIC DNA]</scope>
    <source>
        <strain>SCC1</strain>
    </source>
</reference>
<keyword id="KW-0281">Fimbrium</keyword>
<keyword id="KW-0964">Secreted</keyword>
<keyword id="KW-0843">Virulence</keyword>
<gene>
    <name type="primary">hrpA</name>
</gene>
<name>HRPA_PECCC</name>
<proteinExistence type="inferred from homology"/>
<organism>
    <name type="scientific">Pectobacterium carotovorum subsp. carotovorum</name>
    <name type="common">Erwinia carotovora subsp. carotovora</name>
    <dbReference type="NCBI Taxonomy" id="555"/>
    <lineage>
        <taxon>Bacteria</taxon>
        <taxon>Pseudomonadati</taxon>
        <taxon>Pseudomonadota</taxon>
        <taxon>Gammaproteobacteria</taxon>
        <taxon>Enterobacterales</taxon>
        <taxon>Pectobacteriaceae</taxon>
        <taxon>Pectobacterium</taxon>
    </lineage>
</organism>
<comment type="function">
    <text evidence="1">Major structure protein of the hrp pilus, which is a component of the type III secretion system (T3SS, Hrp secretion system) required for effector protein delivery, parasitism, and pathogenicity. The hrp pilus functions as a conduit for protein delivery into the host cell (By similarity).</text>
</comment>
<comment type="subcellular location">
    <subcellularLocation>
        <location evidence="1">Secreted</location>
    </subcellularLocation>
    <subcellularLocation>
        <location evidence="1">Fimbrium</location>
    </subcellularLocation>
    <text evidence="1">Extracellular and secreted via type III secretion system.</text>
</comment>
<comment type="similarity">
    <text evidence="2">Belongs to the HrpA type 2 family.</text>
</comment>
<protein>
    <recommendedName>
        <fullName>Hrp pili protein HrpA</fullName>
    </recommendedName>
    <alternativeName>
        <fullName>T3SS pilin HrpA</fullName>
    </alternativeName>
</protein>
<feature type="chain" id="PRO_0000226256" description="Hrp pili protein HrpA">
    <location>
        <begin position="1"/>
        <end position="68"/>
    </location>
</feature>
<evidence type="ECO:0000250" key="1"/>
<evidence type="ECO:0000305" key="2"/>
<sequence length="68" mass="6841">MALGLSQVASQAASQTLDTAMAGSLTRAAGAQAQKIALDTENSILDGQMDSASKSLNSGQKAAKAIQF</sequence>
<dbReference type="EMBL" id="AY293288">
    <property type="protein sequence ID" value="AAQ73920.1"/>
    <property type="molecule type" value="Genomic_DNA"/>
</dbReference>
<dbReference type="RefSeq" id="WP_009112561.1">
    <property type="nucleotide sequence ID" value="NZ_VBUA01000006.1"/>
</dbReference>
<dbReference type="OMA" id="SITDGQM"/>
<dbReference type="GO" id="GO:0005576">
    <property type="term" value="C:extracellular region"/>
    <property type="evidence" value="ECO:0007669"/>
    <property type="project" value="UniProtKB-SubCell"/>
</dbReference>
<dbReference type="GO" id="GO:0009289">
    <property type="term" value="C:pilus"/>
    <property type="evidence" value="ECO:0007669"/>
    <property type="project" value="UniProtKB-SubCell"/>
</dbReference>